<comment type="function">
    <text evidence="1">Required for the assembly of the V0 complex of the vacuolar ATPase (V-ATPase) in the endoplasmic reticulum.</text>
</comment>
<comment type="subcellular location">
    <subcellularLocation>
        <location evidence="1">Endoplasmic reticulum membrane</location>
        <topology evidence="1">Multi-pass membrane protein</topology>
    </subcellularLocation>
    <subcellularLocation>
        <location evidence="1">Endoplasmic reticulum-Golgi intermediate compartment membrane</location>
        <topology evidence="1">Multi-pass membrane protein</topology>
    </subcellularLocation>
    <subcellularLocation>
        <location evidence="1">Cytoplasmic vesicle</location>
        <location evidence="1">COPII-coated vesicle membrane</location>
        <topology evidence="1">Multi-pass membrane protein</topology>
    </subcellularLocation>
</comment>
<comment type="similarity">
    <text evidence="1">Belongs to the VMA21 family.</text>
</comment>
<keyword id="KW-0968">Cytoplasmic vesicle</keyword>
<keyword id="KW-0256">Endoplasmic reticulum</keyword>
<keyword id="KW-0472">Membrane</keyword>
<keyword id="KW-1185">Reference proteome</keyword>
<keyword id="KW-0812">Transmembrane</keyword>
<keyword id="KW-1133">Transmembrane helix</keyword>
<organism>
    <name type="scientific">Aspergillus terreus (strain NIH 2624 / FGSC A1156)</name>
    <dbReference type="NCBI Taxonomy" id="341663"/>
    <lineage>
        <taxon>Eukaryota</taxon>
        <taxon>Fungi</taxon>
        <taxon>Dikarya</taxon>
        <taxon>Ascomycota</taxon>
        <taxon>Pezizomycotina</taxon>
        <taxon>Eurotiomycetes</taxon>
        <taxon>Eurotiomycetidae</taxon>
        <taxon>Eurotiales</taxon>
        <taxon>Aspergillaceae</taxon>
        <taxon>Aspergillus</taxon>
        <taxon>Aspergillus subgen. Circumdati</taxon>
    </lineage>
</organism>
<proteinExistence type="inferred from homology"/>
<name>VMA21_ASPTN</name>
<dbReference type="EMBL" id="CH476595">
    <property type="protein sequence ID" value="EAU38386.1"/>
    <property type="molecule type" value="Genomic_DNA"/>
</dbReference>
<dbReference type="RefSeq" id="XP_001208994.1">
    <property type="nucleotide sequence ID" value="XM_001208994.1"/>
</dbReference>
<dbReference type="SMR" id="Q0CXF5"/>
<dbReference type="STRING" id="341663.Q0CXF5"/>
<dbReference type="EnsemblFungi" id="EAU38386">
    <property type="protein sequence ID" value="EAU38386"/>
    <property type="gene ID" value="ATEG_01629"/>
</dbReference>
<dbReference type="GeneID" id="4315583"/>
<dbReference type="VEuPathDB" id="FungiDB:ATEG_01629"/>
<dbReference type="eggNOG" id="ENOG502SBNA">
    <property type="taxonomic scope" value="Eukaryota"/>
</dbReference>
<dbReference type="HOGENOM" id="CLU_154717_1_1_1"/>
<dbReference type="OMA" id="AMKEDQT"/>
<dbReference type="OrthoDB" id="160405at2759"/>
<dbReference type="Proteomes" id="UP000007963">
    <property type="component" value="Unassembled WGS sequence"/>
</dbReference>
<dbReference type="GO" id="GO:0005789">
    <property type="term" value="C:endoplasmic reticulum membrane"/>
    <property type="evidence" value="ECO:0007669"/>
    <property type="project" value="UniProtKB-SubCell"/>
</dbReference>
<dbReference type="GO" id="GO:0033116">
    <property type="term" value="C:endoplasmic reticulum-Golgi intermediate compartment membrane"/>
    <property type="evidence" value="ECO:0007669"/>
    <property type="project" value="UniProtKB-SubCell"/>
</dbReference>
<dbReference type="GO" id="GO:0012507">
    <property type="term" value="C:ER to Golgi transport vesicle membrane"/>
    <property type="evidence" value="ECO:0007669"/>
    <property type="project" value="UniProtKB-SubCell"/>
</dbReference>
<dbReference type="GO" id="GO:0070072">
    <property type="term" value="P:vacuolar proton-transporting V-type ATPase complex assembly"/>
    <property type="evidence" value="ECO:0007669"/>
    <property type="project" value="UniProtKB-UniRule"/>
</dbReference>
<dbReference type="HAMAP" id="MF_03058">
    <property type="entry name" value="VMA21"/>
    <property type="match status" value="1"/>
</dbReference>
<dbReference type="InterPro" id="IPR019013">
    <property type="entry name" value="Vma21"/>
</dbReference>
<dbReference type="PANTHER" id="PTHR31792">
    <property type="entry name" value="VACUOLAR ATPASE ASSEMBLY INTEGRAL MEMBRANE PROTEIN VMA21"/>
    <property type="match status" value="1"/>
</dbReference>
<dbReference type="PANTHER" id="PTHR31792:SF3">
    <property type="entry name" value="VACUOLAR ATPASE ASSEMBLY INTEGRAL MEMBRANE PROTEIN VMA21"/>
    <property type="match status" value="1"/>
</dbReference>
<dbReference type="Pfam" id="PF09446">
    <property type="entry name" value="VMA21"/>
    <property type="match status" value="1"/>
</dbReference>
<reference key="1">
    <citation type="submission" date="2005-09" db="EMBL/GenBank/DDBJ databases">
        <title>Annotation of the Aspergillus terreus NIH2624 genome.</title>
        <authorList>
            <person name="Birren B.W."/>
            <person name="Lander E.S."/>
            <person name="Galagan J.E."/>
            <person name="Nusbaum C."/>
            <person name="Devon K."/>
            <person name="Henn M."/>
            <person name="Ma L.-J."/>
            <person name="Jaffe D.B."/>
            <person name="Butler J."/>
            <person name="Alvarez P."/>
            <person name="Gnerre S."/>
            <person name="Grabherr M."/>
            <person name="Kleber M."/>
            <person name="Mauceli E.W."/>
            <person name="Brockman W."/>
            <person name="Rounsley S."/>
            <person name="Young S.K."/>
            <person name="LaButti K."/>
            <person name="Pushparaj V."/>
            <person name="DeCaprio D."/>
            <person name="Crawford M."/>
            <person name="Koehrsen M."/>
            <person name="Engels R."/>
            <person name="Montgomery P."/>
            <person name="Pearson M."/>
            <person name="Howarth C."/>
            <person name="Larson L."/>
            <person name="Luoma S."/>
            <person name="White J."/>
            <person name="Alvarado L."/>
            <person name="Kodira C.D."/>
            <person name="Zeng Q."/>
            <person name="Oleary S."/>
            <person name="Yandava C."/>
            <person name="Denning D.W."/>
            <person name="Nierman W.C."/>
            <person name="Milne T."/>
            <person name="Madden K."/>
        </authorList>
    </citation>
    <scope>NUCLEOTIDE SEQUENCE [LARGE SCALE GENOMIC DNA]</scope>
    <source>
        <strain>NIH 2624 / FGSC A1156</strain>
    </source>
</reference>
<feature type="chain" id="PRO_0000377582" description="Vacuolar ATPase assembly integral membrane protein vma21">
    <location>
        <begin position="1"/>
        <end position="107"/>
    </location>
</feature>
<feature type="topological domain" description="Cytoplasmic" evidence="1">
    <location>
        <begin position="1"/>
        <end position="35"/>
    </location>
</feature>
<feature type="transmembrane region" description="Helical" evidence="1">
    <location>
        <begin position="36"/>
        <end position="56"/>
    </location>
</feature>
<feature type="topological domain" description="Lumenal" evidence="1">
    <location>
        <begin position="57"/>
        <end position="66"/>
    </location>
</feature>
<feature type="transmembrane region" description="Helical" evidence="1">
    <location>
        <begin position="67"/>
        <end position="87"/>
    </location>
</feature>
<feature type="topological domain" description="Cytoplasmic" evidence="1">
    <location>
        <begin position="88"/>
        <end position="107"/>
    </location>
</feature>
<feature type="region of interest" description="Disordered" evidence="2">
    <location>
        <begin position="1"/>
        <end position="29"/>
    </location>
</feature>
<feature type="short sequence motif" description="Prevents secretion from ER">
    <location>
        <begin position="104"/>
        <end position="107"/>
    </location>
</feature>
<feature type="compositionally biased region" description="Basic and acidic residues" evidence="2">
    <location>
        <begin position="1"/>
        <end position="10"/>
    </location>
</feature>
<evidence type="ECO:0000255" key="1">
    <source>
        <dbReference type="HAMAP-Rule" id="MF_03058"/>
    </source>
</evidence>
<evidence type="ECO:0000256" key="2">
    <source>
        <dbReference type="SAM" id="MobiDB-lite"/>
    </source>
</evidence>
<accession>Q0CXF5</accession>
<sequence>MASRRTRETPADAAAHSTAEKPPVDSDVTPAVPTHVILKLLGFSVAMVSTPLGMYFAMSAFGMSSTFSGISAAIMANVILFLYIYVAWQEDQEEREALAAKKAKKAQ</sequence>
<gene>
    <name type="primary">vma21</name>
    <name type="ORF">ATEG_01629</name>
</gene>
<protein>
    <recommendedName>
        <fullName evidence="1">Vacuolar ATPase assembly integral membrane protein vma21</fullName>
    </recommendedName>
</protein>